<feature type="chain" id="PRO_0000112296" description="Carbamoyl phosphate synthase small chain">
    <location>
        <begin position="1"/>
        <end position="376"/>
    </location>
</feature>
<feature type="domain" description="Glutamine amidotransferase type-1" evidence="1">
    <location>
        <begin position="184"/>
        <end position="376"/>
    </location>
</feature>
<feature type="region of interest" description="CPSase" evidence="1">
    <location>
        <begin position="1"/>
        <end position="183"/>
    </location>
</feature>
<feature type="active site" description="Nucleophile" evidence="1">
    <location>
        <position position="260"/>
    </location>
</feature>
<feature type="active site" evidence="1">
    <location>
        <position position="350"/>
    </location>
</feature>
<feature type="active site" evidence="1">
    <location>
        <position position="352"/>
    </location>
</feature>
<feature type="binding site" evidence="1">
    <location>
        <position position="46"/>
    </location>
    <ligand>
        <name>L-glutamine</name>
        <dbReference type="ChEBI" id="CHEBI:58359"/>
    </ligand>
</feature>
<feature type="binding site" evidence="1">
    <location>
        <position position="232"/>
    </location>
    <ligand>
        <name>L-glutamine</name>
        <dbReference type="ChEBI" id="CHEBI:58359"/>
    </ligand>
</feature>
<feature type="binding site" evidence="1">
    <location>
        <position position="234"/>
    </location>
    <ligand>
        <name>L-glutamine</name>
        <dbReference type="ChEBI" id="CHEBI:58359"/>
    </ligand>
</feature>
<feature type="binding site" evidence="1">
    <location>
        <position position="261"/>
    </location>
    <ligand>
        <name>L-glutamine</name>
        <dbReference type="ChEBI" id="CHEBI:58359"/>
    </ligand>
</feature>
<feature type="binding site" evidence="1">
    <location>
        <position position="264"/>
    </location>
    <ligand>
        <name>L-glutamine</name>
        <dbReference type="ChEBI" id="CHEBI:58359"/>
    </ligand>
</feature>
<feature type="binding site" evidence="1">
    <location>
        <position position="302"/>
    </location>
    <ligand>
        <name>L-glutamine</name>
        <dbReference type="ChEBI" id="CHEBI:58359"/>
    </ligand>
</feature>
<feature type="binding site" evidence="1">
    <location>
        <position position="304"/>
    </location>
    <ligand>
        <name>L-glutamine</name>
        <dbReference type="ChEBI" id="CHEBI:58359"/>
    </ligand>
</feature>
<feature type="binding site" evidence="1">
    <location>
        <position position="305"/>
    </location>
    <ligand>
        <name>L-glutamine</name>
        <dbReference type="ChEBI" id="CHEBI:58359"/>
    </ligand>
</feature>
<evidence type="ECO:0000255" key="1">
    <source>
        <dbReference type="HAMAP-Rule" id="MF_01209"/>
    </source>
</evidence>
<gene>
    <name evidence="1" type="primary">carA</name>
    <name type="ordered locus">Rv1383</name>
    <name type="ORF">MTCY02B12.17</name>
</gene>
<protein>
    <recommendedName>
        <fullName evidence="1">Carbamoyl phosphate synthase small chain</fullName>
        <ecNumber evidence="1">6.3.5.5</ecNumber>
    </recommendedName>
    <alternativeName>
        <fullName evidence="1">Carbamoyl phosphate synthetase glutamine chain</fullName>
    </alternativeName>
</protein>
<name>CARA_MYCTU</name>
<dbReference type="EC" id="6.3.5.5" evidence="1"/>
<dbReference type="EMBL" id="AL123456">
    <property type="protein sequence ID" value="CCP44142.1"/>
    <property type="molecule type" value="Genomic_DNA"/>
</dbReference>
<dbReference type="PIR" id="D70959">
    <property type="entry name" value="D70959"/>
</dbReference>
<dbReference type="RefSeq" id="NP_215899.1">
    <property type="nucleotide sequence ID" value="NC_000962.3"/>
</dbReference>
<dbReference type="RefSeq" id="WP_003407208.1">
    <property type="nucleotide sequence ID" value="NZ_NVQJ01000050.1"/>
</dbReference>
<dbReference type="SMR" id="P9WPK5"/>
<dbReference type="FunCoup" id="P9WPK5">
    <property type="interactions" value="403"/>
</dbReference>
<dbReference type="STRING" id="83332.Rv1383"/>
<dbReference type="PaxDb" id="83332-Rv1383"/>
<dbReference type="DNASU" id="886761"/>
<dbReference type="GeneID" id="45425362"/>
<dbReference type="GeneID" id="886761"/>
<dbReference type="KEGG" id="mtu:Rv1383"/>
<dbReference type="KEGG" id="mtv:RVBD_1383"/>
<dbReference type="TubercuList" id="Rv1383"/>
<dbReference type="eggNOG" id="COG0505">
    <property type="taxonomic scope" value="Bacteria"/>
</dbReference>
<dbReference type="InParanoid" id="P9WPK5"/>
<dbReference type="OrthoDB" id="9804328at2"/>
<dbReference type="PhylomeDB" id="P9WPK5"/>
<dbReference type="UniPathway" id="UPA00068">
    <property type="reaction ID" value="UER00171"/>
</dbReference>
<dbReference type="UniPathway" id="UPA00070">
    <property type="reaction ID" value="UER00115"/>
</dbReference>
<dbReference type="Proteomes" id="UP000001584">
    <property type="component" value="Chromosome"/>
</dbReference>
<dbReference type="GO" id="GO:0005951">
    <property type="term" value="C:carbamoyl-phosphate synthase complex"/>
    <property type="evidence" value="ECO:0000318"/>
    <property type="project" value="GO_Central"/>
</dbReference>
<dbReference type="GO" id="GO:0005737">
    <property type="term" value="C:cytoplasm"/>
    <property type="evidence" value="ECO:0000318"/>
    <property type="project" value="GO_Central"/>
</dbReference>
<dbReference type="GO" id="GO:0005524">
    <property type="term" value="F:ATP binding"/>
    <property type="evidence" value="ECO:0007669"/>
    <property type="project" value="UniProtKB-UniRule"/>
</dbReference>
<dbReference type="GO" id="GO:0004088">
    <property type="term" value="F:carbamoyl-phosphate synthase (glutamine-hydrolyzing) activity"/>
    <property type="evidence" value="ECO:0007669"/>
    <property type="project" value="UniProtKB-UniRule"/>
</dbReference>
<dbReference type="GO" id="GO:0004359">
    <property type="term" value="F:glutaminase activity"/>
    <property type="evidence" value="ECO:0007669"/>
    <property type="project" value="RHEA"/>
</dbReference>
<dbReference type="GO" id="GO:0006207">
    <property type="term" value="P:'de novo' pyrimidine nucleobase biosynthetic process"/>
    <property type="evidence" value="ECO:0007669"/>
    <property type="project" value="InterPro"/>
</dbReference>
<dbReference type="GO" id="GO:0044205">
    <property type="term" value="P:'de novo' UMP biosynthetic process"/>
    <property type="evidence" value="ECO:0007669"/>
    <property type="project" value="UniProtKB-UniRule"/>
</dbReference>
<dbReference type="GO" id="GO:0006541">
    <property type="term" value="P:glutamine metabolic process"/>
    <property type="evidence" value="ECO:0007669"/>
    <property type="project" value="InterPro"/>
</dbReference>
<dbReference type="GO" id="GO:0006526">
    <property type="term" value="P:L-arginine biosynthetic process"/>
    <property type="evidence" value="ECO:0000318"/>
    <property type="project" value="GO_Central"/>
</dbReference>
<dbReference type="CDD" id="cd01744">
    <property type="entry name" value="GATase1_CPSase"/>
    <property type="match status" value="1"/>
</dbReference>
<dbReference type="FunFam" id="3.40.50.880:FF:000018">
    <property type="entry name" value="Carbamoyl-phosphate synthase small chain"/>
    <property type="match status" value="1"/>
</dbReference>
<dbReference type="FunFam" id="3.50.30.20:FF:000001">
    <property type="entry name" value="Carbamoyl-phosphate synthase small chain"/>
    <property type="match status" value="1"/>
</dbReference>
<dbReference type="Gene3D" id="3.40.50.880">
    <property type="match status" value="1"/>
</dbReference>
<dbReference type="Gene3D" id="3.50.30.20">
    <property type="entry name" value="Carbamoyl-phosphate synthase small subunit, N-terminal domain"/>
    <property type="match status" value="1"/>
</dbReference>
<dbReference type="HAMAP" id="MF_01209">
    <property type="entry name" value="CPSase_S_chain"/>
    <property type="match status" value="1"/>
</dbReference>
<dbReference type="InterPro" id="IPR050472">
    <property type="entry name" value="Anth_synth/Amidotransfase"/>
</dbReference>
<dbReference type="InterPro" id="IPR006274">
    <property type="entry name" value="CarbamoylP_synth_ssu"/>
</dbReference>
<dbReference type="InterPro" id="IPR002474">
    <property type="entry name" value="CarbamoylP_synth_ssu_N"/>
</dbReference>
<dbReference type="InterPro" id="IPR036480">
    <property type="entry name" value="CarbP_synth_ssu_N_sf"/>
</dbReference>
<dbReference type="InterPro" id="IPR029062">
    <property type="entry name" value="Class_I_gatase-like"/>
</dbReference>
<dbReference type="InterPro" id="IPR035686">
    <property type="entry name" value="CPSase_GATase1"/>
</dbReference>
<dbReference type="InterPro" id="IPR017926">
    <property type="entry name" value="GATASE"/>
</dbReference>
<dbReference type="NCBIfam" id="TIGR01368">
    <property type="entry name" value="CPSaseIIsmall"/>
    <property type="match status" value="1"/>
</dbReference>
<dbReference type="NCBIfam" id="NF009475">
    <property type="entry name" value="PRK12838.1"/>
    <property type="match status" value="1"/>
</dbReference>
<dbReference type="PANTHER" id="PTHR43418:SF7">
    <property type="entry name" value="CARBAMOYL-PHOSPHATE SYNTHASE SMALL CHAIN"/>
    <property type="match status" value="1"/>
</dbReference>
<dbReference type="PANTHER" id="PTHR43418">
    <property type="entry name" value="MULTIFUNCTIONAL TRYPTOPHAN BIOSYNTHESIS PROTEIN-RELATED"/>
    <property type="match status" value="1"/>
</dbReference>
<dbReference type="Pfam" id="PF00988">
    <property type="entry name" value="CPSase_sm_chain"/>
    <property type="match status" value="1"/>
</dbReference>
<dbReference type="Pfam" id="PF00117">
    <property type="entry name" value="GATase"/>
    <property type="match status" value="1"/>
</dbReference>
<dbReference type="PRINTS" id="PR00097">
    <property type="entry name" value="ANTSNTHASEII"/>
</dbReference>
<dbReference type="PRINTS" id="PR00099">
    <property type="entry name" value="CPSGATASE"/>
</dbReference>
<dbReference type="PRINTS" id="PR00096">
    <property type="entry name" value="GATASE"/>
</dbReference>
<dbReference type="SMART" id="SM01097">
    <property type="entry name" value="CPSase_sm_chain"/>
    <property type="match status" value="1"/>
</dbReference>
<dbReference type="SUPFAM" id="SSF52021">
    <property type="entry name" value="Carbamoyl phosphate synthetase, small subunit N-terminal domain"/>
    <property type="match status" value="1"/>
</dbReference>
<dbReference type="SUPFAM" id="SSF52317">
    <property type="entry name" value="Class I glutamine amidotransferase-like"/>
    <property type="match status" value="1"/>
</dbReference>
<dbReference type="PROSITE" id="PS51273">
    <property type="entry name" value="GATASE_TYPE_1"/>
    <property type="match status" value="1"/>
</dbReference>
<organism>
    <name type="scientific">Mycobacterium tuberculosis (strain ATCC 25618 / H37Rv)</name>
    <dbReference type="NCBI Taxonomy" id="83332"/>
    <lineage>
        <taxon>Bacteria</taxon>
        <taxon>Bacillati</taxon>
        <taxon>Actinomycetota</taxon>
        <taxon>Actinomycetes</taxon>
        <taxon>Mycobacteriales</taxon>
        <taxon>Mycobacteriaceae</taxon>
        <taxon>Mycobacterium</taxon>
        <taxon>Mycobacterium tuberculosis complex</taxon>
    </lineage>
</organism>
<reference key="1">
    <citation type="journal article" date="1998" name="Nature">
        <title>Deciphering the biology of Mycobacterium tuberculosis from the complete genome sequence.</title>
        <authorList>
            <person name="Cole S.T."/>
            <person name="Brosch R."/>
            <person name="Parkhill J."/>
            <person name="Garnier T."/>
            <person name="Churcher C.M."/>
            <person name="Harris D.E."/>
            <person name="Gordon S.V."/>
            <person name="Eiglmeier K."/>
            <person name="Gas S."/>
            <person name="Barry C.E. III"/>
            <person name="Tekaia F."/>
            <person name="Badcock K."/>
            <person name="Basham D."/>
            <person name="Brown D."/>
            <person name="Chillingworth T."/>
            <person name="Connor R."/>
            <person name="Davies R.M."/>
            <person name="Devlin K."/>
            <person name="Feltwell T."/>
            <person name="Gentles S."/>
            <person name="Hamlin N."/>
            <person name="Holroyd S."/>
            <person name="Hornsby T."/>
            <person name="Jagels K."/>
            <person name="Krogh A."/>
            <person name="McLean J."/>
            <person name="Moule S."/>
            <person name="Murphy L.D."/>
            <person name="Oliver S."/>
            <person name="Osborne J."/>
            <person name="Quail M.A."/>
            <person name="Rajandream M.A."/>
            <person name="Rogers J."/>
            <person name="Rutter S."/>
            <person name="Seeger K."/>
            <person name="Skelton S."/>
            <person name="Squares S."/>
            <person name="Squares R."/>
            <person name="Sulston J.E."/>
            <person name="Taylor K."/>
            <person name="Whitehead S."/>
            <person name="Barrell B.G."/>
        </authorList>
    </citation>
    <scope>NUCLEOTIDE SEQUENCE [LARGE SCALE GENOMIC DNA]</scope>
    <source>
        <strain>ATCC 25618 / H37Rv</strain>
    </source>
</reference>
<reference key="2">
    <citation type="journal article" date="2011" name="Mol. Cell. Proteomics">
        <title>Proteogenomic analysis of Mycobacterium tuberculosis by high resolution mass spectrometry.</title>
        <authorList>
            <person name="Kelkar D.S."/>
            <person name="Kumar D."/>
            <person name="Kumar P."/>
            <person name="Balakrishnan L."/>
            <person name="Muthusamy B."/>
            <person name="Yadav A.K."/>
            <person name="Shrivastava P."/>
            <person name="Marimuthu A."/>
            <person name="Anand S."/>
            <person name="Sundaram H."/>
            <person name="Kingsbury R."/>
            <person name="Harsha H.C."/>
            <person name="Nair B."/>
            <person name="Prasad T.S."/>
            <person name="Chauhan D.S."/>
            <person name="Katoch K."/>
            <person name="Katoch V.M."/>
            <person name="Kumar P."/>
            <person name="Chaerkady R."/>
            <person name="Ramachandran S."/>
            <person name="Dash D."/>
            <person name="Pandey A."/>
        </authorList>
    </citation>
    <scope>IDENTIFICATION BY MASS SPECTROMETRY [LARGE SCALE ANALYSIS]</scope>
    <source>
        <strain>ATCC 25618 / H37Rv</strain>
    </source>
</reference>
<comment type="function">
    <text evidence="1">Small subunit of the glutamine-dependent carbamoyl phosphate synthetase (CPSase). CPSase catalyzes the formation of carbamoyl phosphate from the ammonia moiety of glutamine, carbonate, and phosphate donated by ATP, constituting the first step of 2 biosynthetic pathways, one leading to arginine and/or urea and the other to pyrimidine nucleotides. The small subunit (glutamine amidotransferase) binds and cleaves glutamine to supply the large subunit with the substrate ammonia.</text>
</comment>
<comment type="catalytic activity">
    <reaction evidence="1">
        <text>hydrogencarbonate + L-glutamine + 2 ATP + H2O = carbamoyl phosphate + L-glutamate + 2 ADP + phosphate + 2 H(+)</text>
        <dbReference type="Rhea" id="RHEA:18633"/>
        <dbReference type="ChEBI" id="CHEBI:15377"/>
        <dbReference type="ChEBI" id="CHEBI:15378"/>
        <dbReference type="ChEBI" id="CHEBI:17544"/>
        <dbReference type="ChEBI" id="CHEBI:29985"/>
        <dbReference type="ChEBI" id="CHEBI:30616"/>
        <dbReference type="ChEBI" id="CHEBI:43474"/>
        <dbReference type="ChEBI" id="CHEBI:58228"/>
        <dbReference type="ChEBI" id="CHEBI:58359"/>
        <dbReference type="ChEBI" id="CHEBI:456216"/>
        <dbReference type="EC" id="6.3.5.5"/>
    </reaction>
</comment>
<comment type="catalytic activity">
    <molecule>Carbamoyl phosphate synthase small chain</molecule>
    <reaction evidence="1">
        <text>L-glutamine + H2O = L-glutamate + NH4(+)</text>
        <dbReference type="Rhea" id="RHEA:15889"/>
        <dbReference type="ChEBI" id="CHEBI:15377"/>
        <dbReference type="ChEBI" id="CHEBI:28938"/>
        <dbReference type="ChEBI" id="CHEBI:29985"/>
        <dbReference type="ChEBI" id="CHEBI:58359"/>
    </reaction>
</comment>
<comment type="pathway">
    <text evidence="1">Amino-acid biosynthesis; L-arginine biosynthesis; carbamoyl phosphate from bicarbonate: step 1/1.</text>
</comment>
<comment type="pathway">
    <text evidence="1">Pyrimidine metabolism; UMP biosynthesis via de novo pathway; (S)-dihydroorotate from bicarbonate: step 1/3.</text>
</comment>
<comment type="subunit">
    <text evidence="1">Composed of two chains; the small (or glutamine) chain promotes the hydrolysis of glutamine to ammonia, which is used by the large (or ammonia) chain to synthesize carbamoyl phosphate. Tetramer of heterodimers (alpha,beta)4.</text>
</comment>
<comment type="similarity">
    <text evidence="1">Belongs to the CarA family.</text>
</comment>
<sequence>MSKAVLVLEDGRVFTGRPFGATGQALGEAVFSTGMSGYQETLTDPSYHRQIVVATAPQIGNTGWNGEDSESRGERIWVAGYAVRDPSPRASNWRATGTLEDELIRQRIVGIAGIDTRAVVRHLRSRGSMKAGVFSDGALAEPADLIARVRAQQSMLGADLAGEVSTAEPYVVEPDGPPGVSRFTVAALDLGIKTNTPRNFARRGIRCHVLPASTTFEQIAELNPHGVFLSNGPGDPATADHVVALTREVLGAGIPLFGICFGNQILGRALGLSTYKMVFGHRGINIPVVDHATGRVAVTAQNHGFALQGEAGQSFATPFGPAVVSHTCANDGVVEGVKLVDGRAFSVQYHPEAAAGPHDAEYLFDQFVELMAGEGR</sequence>
<accession>P9WPK5</accession>
<accession>L0T6P8</accession>
<accession>P71811</accession>
<keyword id="KW-0028">Amino-acid biosynthesis</keyword>
<keyword id="KW-0055">Arginine biosynthesis</keyword>
<keyword id="KW-0067">ATP-binding</keyword>
<keyword id="KW-0315">Glutamine amidotransferase</keyword>
<keyword id="KW-0436">Ligase</keyword>
<keyword id="KW-0547">Nucleotide-binding</keyword>
<keyword id="KW-0665">Pyrimidine biosynthesis</keyword>
<keyword id="KW-1185">Reference proteome</keyword>
<proteinExistence type="evidence at protein level"/>